<keyword id="KW-0156">Chromatin regulator</keyword>
<keyword id="KW-0238">DNA-binding</keyword>
<keyword id="KW-0489">Methyltransferase</keyword>
<keyword id="KW-0539">Nucleus</keyword>
<keyword id="KW-1185">Reference proteome</keyword>
<keyword id="KW-0949">S-adenosyl-L-methionine</keyword>
<keyword id="KW-0804">Transcription</keyword>
<keyword id="KW-0805">Transcription regulation</keyword>
<keyword id="KW-0808">Transferase</keyword>
<name>CMT2_MAIZE</name>
<proteinExistence type="evidence at transcript level"/>
<gene>
    <name type="primary">ZMET5</name>
</gene>
<dbReference type="EC" id="2.1.1.37"/>
<dbReference type="EMBL" id="AY027539">
    <property type="protein sequence ID" value="AAK15805.1"/>
    <property type="molecule type" value="mRNA"/>
</dbReference>
<dbReference type="SMR" id="Q9ARI6"/>
<dbReference type="FunCoup" id="Q9ARI6">
    <property type="interactions" value="631"/>
</dbReference>
<dbReference type="STRING" id="4577.Q9ARI6"/>
<dbReference type="InParanoid" id="Q9ARI6"/>
<dbReference type="Proteomes" id="UP000007305">
    <property type="component" value="Unplaced"/>
</dbReference>
<dbReference type="ExpressionAtlas" id="Q9ARI6">
    <property type="expression patterns" value="baseline and differential"/>
</dbReference>
<dbReference type="GO" id="GO:0005634">
    <property type="term" value="C:nucleus"/>
    <property type="evidence" value="ECO:0000318"/>
    <property type="project" value="GO_Central"/>
</dbReference>
<dbReference type="GO" id="GO:0003682">
    <property type="term" value="F:chromatin binding"/>
    <property type="evidence" value="ECO:0007669"/>
    <property type="project" value="InterPro"/>
</dbReference>
<dbReference type="GO" id="GO:0003886">
    <property type="term" value="F:DNA (cytosine-5-)-methyltransferase activity"/>
    <property type="evidence" value="ECO:0000318"/>
    <property type="project" value="GO_Central"/>
</dbReference>
<dbReference type="GO" id="GO:0003677">
    <property type="term" value="F:DNA binding"/>
    <property type="evidence" value="ECO:0000318"/>
    <property type="project" value="GO_Central"/>
</dbReference>
<dbReference type="GO" id="GO:0032259">
    <property type="term" value="P:methylation"/>
    <property type="evidence" value="ECO:0007669"/>
    <property type="project" value="UniProtKB-KW"/>
</dbReference>
<dbReference type="GO" id="GO:0044027">
    <property type="term" value="P:negative regulation of gene expression via chromosomal CpG island methylation"/>
    <property type="evidence" value="ECO:0000318"/>
    <property type="project" value="GO_Central"/>
</dbReference>
<dbReference type="CDD" id="cd04716">
    <property type="entry name" value="BAH_plantDCM_I"/>
    <property type="match status" value="1"/>
</dbReference>
<dbReference type="CDD" id="cd18635">
    <property type="entry name" value="CD_CMT3_like"/>
    <property type="match status" value="1"/>
</dbReference>
<dbReference type="FunFam" id="2.30.30.490:FF:000011">
    <property type="entry name" value="DNA (cytosine-5)-methyltransferase 1"/>
    <property type="match status" value="1"/>
</dbReference>
<dbReference type="FunFam" id="3.40.50.150:FF:000143">
    <property type="entry name" value="DNA (cytosine-5)-methyltransferase 1"/>
    <property type="match status" value="1"/>
</dbReference>
<dbReference type="FunFam" id="3.90.120.10:FF:000003">
    <property type="entry name" value="DNA (cytosine-5)-methyltransferase 1"/>
    <property type="match status" value="1"/>
</dbReference>
<dbReference type="Gene3D" id="2.30.30.490">
    <property type="match status" value="1"/>
</dbReference>
<dbReference type="Gene3D" id="3.90.120.10">
    <property type="entry name" value="DNA Methylase, subunit A, domain 2"/>
    <property type="match status" value="1"/>
</dbReference>
<dbReference type="Gene3D" id="3.40.50.150">
    <property type="entry name" value="Vaccinia Virus protein VP39"/>
    <property type="match status" value="1"/>
</dbReference>
<dbReference type="InterPro" id="IPR001025">
    <property type="entry name" value="BAH_dom"/>
</dbReference>
<dbReference type="InterPro" id="IPR043151">
    <property type="entry name" value="BAH_sf"/>
</dbReference>
<dbReference type="InterPro" id="IPR050390">
    <property type="entry name" value="C5-Methyltransferase"/>
</dbReference>
<dbReference type="InterPro" id="IPR018117">
    <property type="entry name" value="C5_DNA_meth_AS"/>
</dbReference>
<dbReference type="InterPro" id="IPR001525">
    <property type="entry name" value="C5_MeTfrase"/>
</dbReference>
<dbReference type="InterPro" id="IPR016197">
    <property type="entry name" value="Chromo-like_dom_sf"/>
</dbReference>
<dbReference type="InterPro" id="IPR000953">
    <property type="entry name" value="Chromo/chromo_shadow_dom"/>
</dbReference>
<dbReference type="InterPro" id="IPR023780">
    <property type="entry name" value="Chromo_domain"/>
</dbReference>
<dbReference type="InterPro" id="IPR029063">
    <property type="entry name" value="SAM-dependent_MTases_sf"/>
</dbReference>
<dbReference type="PANTHER" id="PTHR10629">
    <property type="entry name" value="CYTOSINE-SPECIFIC METHYLTRANSFERASE"/>
    <property type="match status" value="1"/>
</dbReference>
<dbReference type="PANTHER" id="PTHR10629:SF50">
    <property type="entry name" value="DNA (CYTOSINE-5)-METHYLTRANSFERASE CMT3"/>
    <property type="match status" value="1"/>
</dbReference>
<dbReference type="Pfam" id="PF01426">
    <property type="entry name" value="BAH"/>
    <property type="match status" value="1"/>
</dbReference>
<dbReference type="Pfam" id="PF00385">
    <property type="entry name" value="Chromo"/>
    <property type="match status" value="1"/>
</dbReference>
<dbReference type="Pfam" id="PF00145">
    <property type="entry name" value="DNA_methylase"/>
    <property type="match status" value="1"/>
</dbReference>
<dbReference type="PRINTS" id="PR00105">
    <property type="entry name" value="C5METTRFRASE"/>
</dbReference>
<dbReference type="SMART" id="SM00439">
    <property type="entry name" value="BAH"/>
    <property type="match status" value="1"/>
</dbReference>
<dbReference type="SMART" id="SM00298">
    <property type="entry name" value="CHROMO"/>
    <property type="match status" value="1"/>
</dbReference>
<dbReference type="SUPFAM" id="SSF54160">
    <property type="entry name" value="Chromo domain-like"/>
    <property type="match status" value="1"/>
</dbReference>
<dbReference type="SUPFAM" id="SSF53335">
    <property type="entry name" value="S-adenosyl-L-methionine-dependent methyltransferases"/>
    <property type="match status" value="1"/>
</dbReference>
<dbReference type="PROSITE" id="PS51038">
    <property type="entry name" value="BAH"/>
    <property type="match status" value="1"/>
</dbReference>
<dbReference type="PROSITE" id="PS00094">
    <property type="entry name" value="C5_MTASE_1"/>
    <property type="match status" value="1"/>
</dbReference>
<dbReference type="PROSITE" id="PS50013">
    <property type="entry name" value="CHROMO_2"/>
    <property type="match status" value="1"/>
</dbReference>
<dbReference type="PROSITE" id="PS51679">
    <property type="entry name" value="SAM_MT_C5"/>
    <property type="match status" value="1"/>
</dbReference>
<evidence type="ECO:0000250" key="1"/>
<evidence type="ECO:0000255" key="2">
    <source>
        <dbReference type="PROSITE-ProRule" id="PRU00053"/>
    </source>
</evidence>
<evidence type="ECO:0000255" key="3">
    <source>
        <dbReference type="PROSITE-ProRule" id="PRU00370"/>
    </source>
</evidence>
<evidence type="ECO:0000255" key="4">
    <source>
        <dbReference type="PROSITE-ProRule" id="PRU01016"/>
    </source>
</evidence>
<evidence type="ECO:0000255" key="5">
    <source>
        <dbReference type="PROSITE-ProRule" id="PRU10018"/>
    </source>
</evidence>
<evidence type="ECO:0000256" key="6">
    <source>
        <dbReference type="SAM" id="MobiDB-lite"/>
    </source>
</evidence>
<sequence length="915" mass="101641">MAPSSPSSARPTRASGRERSAMAEEIHQNQEEEEEVVAASTAKRRRKAASSGKKPKPTPKQAKPAVAGMKKKGETEKTEPVVDDVCAEEPDEEELAMGEEEAEAEEQAMQEVVAAVAAGSPGKKRVGRRSAAASGDHVPEFIGSPVGAAEAHSNWPKRYERSTAANKPEEDDELKARCHYRSAKVDNIVYCLGDDVYVKAGENEADYIGRITEFFEGTDRCHYFTCRWFFRAEDTVINSLVSINVDGHKHDPRRVFLSEEKNDNVLDCIISKVKIVHVDPNMDPKAKAQLIEHCDLYYDMSYSVAYSTFANISSENGQSGSETASGISSDDAGLETSSNMPERTATLLDLYSGCGGMSTGLCLGAALSGLKLETRWAVDLNSFACQSLKYNHPQTEVRNEKADEFLALLKEWAVLCEKYVHQDVDSNLAGSEDQEDADTLDKDEFVVQKLIGIRYDGTGRKKGVYFKVQWEEYGPEEDTWEPIDNLSDCPLKIREFVQEGRKRKILPLPGDVDVICGGPPCQGISGFNRFRNRDEPLKDEKNKQMVTFMDIVAYLKPKYVLMENVVDILKFADGYLGKYALSCLVAMKYQARLGMMVAGCYGLPQFRMRVFLWGALSSMVLPKYPLPTYDVVVRGGAPNAFSQCMVAYDETQRPSLKKALLLGDAFSDLPKVENHQPNDVMEYGGSPKTEFQRYIRLGRKDMLDWSFGEEAGPDEGKLLDHQPLRLNNDDYERVKQIPVKKGANFRDLKGVKVGANNVVEWDPEVERVYLSSGKPLVPDYAMSFIKGKSLKPFGRLWWDQTVPTVVTRAEPHNQVILHPTQARVLTIRENARLQGFPDYYRLFGPIKEKYIQVGNAVAVPVARALGYCLGQAYLGESDGSQPLYQLPASFTSVGRTAVQANAASVGTPAGEVVEQ</sequence>
<organism>
    <name type="scientific">Zea mays</name>
    <name type="common">Maize</name>
    <dbReference type="NCBI Taxonomy" id="4577"/>
    <lineage>
        <taxon>Eukaryota</taxon>
        <taxon>Viridiplantae</taxon>
        <taxon>Streptophyta</taxon>
        <taxon>Embryophyta</taxon>
        <taxon>Tracheophyta</taxon>
        <taxon>Spermatophyta</taxon>
        <taxon>Magnoliopsida</taxon>
        <taxon>Liliopsida</taxon>
        <taxon>Poales</taxon>
        <taxon>Poaceae</taxon>
        <taxon>PACMAD clade</taxon>
        <taxon>Panicoideae</taxon>
        <taxon>Andropogonodae</taxon>
        <taxon>Andropogoneae</taxon>
        <taxon>Tripsacinae</taxon>
        <taxon>Zea</taxon>
    </lineage>
</organism>
<comment type="function">
    <text evidence="1">May be involved in the CpXpG methylation and in gene silencing.</text>
</comment>
<comment type="catalytic activity">
    <reaction evidence="5">
        <text>a 2'-deoxycytidine in DNA + S-adenosyl-L-methionine = a 5-methyl-2'-deoxycytidine in DNA + S-adenosyl-L-homocysteine + H(+)</text>
        <dbReference type="Rhea" id="RHEA:13681"/>
        <dbReference type="Rhea" id="RHEA-COMP:11369"/>
        <dbReference type="Rhea" id="RHEA-COMP:11370"/>
        <dbReference type="ChEBI" id="CHEBI:15378"/>
        <dbReference type="ChEBI" id="CHEBI:57856"/>
        <dbReference type="ChEBI" id="CHEBI:59789"/>
        <dbReference type="ChEBI" id="CHEBI:85452"/>
        <dbReference type="ChEBI" id="CHEBI:85454"/>
        <dbReference type="EC" id="2.1.1.37"/>
    </reaction>
</comment>
<comment type="subcellular location">
    <subcellularLocation>
        <location evidence="1">Nucleus</location>
    </subcellularLocation>
</comment>
<comment type="similarity">
    <text evidence="4">Belongs to the class I-like SAM-binding methyltransferase superfamily. C5-methyltransferase family.</text>
</comment>
<accession>Q9ARI6</accession>
<reference key="1">
    <citation type="journal article" date="2001" name="Plant Cell">
        <title>Maize chromomethylase Zea methyltransferase2 is required for CpNpG methylation.</title>
        <authorList>
            <person name="Papa C.M."/>
            <person name="Springer N.M."/>
            <person name="Muszynski M.G."/>
            <person name="Meeley R."/>
            <person name="Kaeppler S.M."/>
        </authorList>
    </citation>
    <scope>NUCLEOTIDE SEQUENCE [MRNA]</scope>
</reference>
<feature type="chain" id="PRO_0000246695" description="DNA (cytosine-5)-methyltransferase 2">
    <location>
        <begin position="1"/>
        <end position="915"/>
    </location>
</feature>
<feature type="domain" description="BAH" evidence="3">
    <location>
        <begin position="188"/>
        <end position="313"/>
    </location>
</feature>
<feature type="domain" description="SAM-dependent MTase C5-type" evidence="4">
    <location>
        <begin position="345"/>
        <end position="876"/>
    </location>
</feature>
<feature type="domain" description="Chromo" evidence="2">
    <location>
        <begin position="445"/>
        <end position="508"/>
    </location>
</feature>
<feature type="region of interest" description="Disordered" evidence="6">
    <location>
        <begin position="1"/>
        <end position="171"/>
    </location>
</feature>
<feature type="region of interest" description="Disordered" evidence="6">
    <location>
        <begin position="315"/>
        <end position="338"/>
    </location>
</feature>
<feature type="compositionally biased region" description="Low complexity" evidence="6">
    <location>
        <begin position="1"/>
        <end position="14"/>
    </location>
</feature>
<feature type="compositionally biased region" description="Basic and acidic residues" evidence="6">
    <location>
        <begin position="15"/>
        <end position="30"/>
    </location>
</feature>
<feature type="compositionally biased region" description="Basic residues" evidence="6">
    <location>
        <begin position="42"/>
        <end position="57"/>
    </location>
</feature>
<feature type="compositionally biased region" description="Basic and acidic residues" evidence="6">
    <location>
        <begin position="71"/>
        <end position="80"/>
    </location>
</feature>
<feature type="compositionally biased region" description="Acidic residues" evidence="6">
    <location>
        <begin position="81"/>
        <end position="108"/>
    </location>
</feature>
<feature type="compositionally biased region" description="Low complexity" evidence="6">
    <location>
        <begin position="109"/>
        <end position="119"/>
    </location>
</feature>
<feature type="compositionally biased region" description="Polar residues" evidence="6">
    <location>
        <begin position="315"/>
        <end position="328"/>
    </location>
</feature>
<feature type="active site" evidence="4 5">
    <location>
        <position position="521"/>
    </location>
</feature>
<protein>
    <recommendedName>
        <fullName>DNA (cytosine-5)-methyltransferase 2</fullName>
        <ecNumber>2.1.1.37</ecNumber>
    </recommendedName>
    <alternativeName>
        <fullName>Chromomethylase 2</fullName>
    </alternativeName>
    <alternativeName>
        <fullName>DNA cytosine methyltransferase MET5</fullName>
    </alternativeName>
    <alternativeName>
        <fullName>Zea methyltransferase5</fullName>
        <shortName>Zmet5</shortName>
    </alternativeName>
</protein>